<protein>
    <recommendedName>
        <fullName>Protein NPAT</fullName>
    </recommendedName>
    <alternativeName>
        <fullName>Nuclear protein of the ataxia telangiectasia mutated locus</fullName>
        <shortName>Nuclear protein of the ATM locus</shortName>
    </alternativeName>
    <alternativeName>
        <fullName>p220</fullName>
    </alternativeName>
</protein>
<name>NPAT_HUMAN</name>
<reference key="1">
    <citation type="journal article" date="1996" name="Genome Res.">
        <title>Identification and characterization of a new gene physically linked to the ATM gene.</title>
        <authorList>
            <person name="Imai T."/>
            <person name="Yamauchi M."/>
            <person name="Seki N."/>
            <person name="Sugawara T."/>
            <person name="Saito T."/>
            <person name="Matsuda Y."/>
            <person name="Ito H."/>
            <person name="Nagase T."/>
            <person name="Nomura N."/>
            <person name="Hori T."/>
        </authorList>
    </citation>
    <scope>NUCLEOTIDE SEQUENCE [MRNA]</scope>
    <scope>TISSUE SPECIFICITY</scope>
    <scope>VARIANT ILE-575</scope>
</reference>
<reference key="2">
    <citation type="journal article" date="1996" name="Hum. Mol. Genet.">
        <title>A gene transcribed from the bidirectional ATM promoter coding for a serine rich protein: amino acid sequence, structure and expression studies.</title>
        <authorList>
            <person name="Byrd P.J."/>
            <person name="Cooper P.R."/>
            <person name="Stankovic T."/>
            <person name="Kullar H.S."/>
            <person name="Watts G.D.J."/>
            <person name="Robinson P.J."/>
            <person name="Taylor A.M.R."/>
        </authorList>
    </citation>
    <scope>NUCLEOTIDE SEQUENCE [MRNA]</scope>
    <scope>TISSUE SPECIFICITY</scope>
    <scope>VARIANTS LEU-295; MET-399; ILE-575; ILE-621; GLU-967; VAL-973; ALA-987 AND ARG-1191</scope>
</reference>
<reference key="3">
    <citation type="journal article" date="1997" name="Genomics">
        <title>The structure and organization of the human NPAT gene.</title>
        <authorList>
            <person name="Imai T."/>
            <person name="Sugawara T."/>
            <person name="Nishiyama A."/>
            <person name="Shimada R."/>
            <person name="Ohki R."/>
            <person name="Seki N."/>
            <person name="Sagara M."/>
            <person name="Ito H."/>
            <person name="Yamauchi M."/>
            <person name="Hori T."/>
        </authorList>
    </citation>
    <scope>NUCLEOTIDE SEQUENCE [GENOMIC DNA]</scope>
    <scope>VARIANT ILE-575</scope>
</reference>
<reference key="4">
    <citation type="journal article" date="2004" name="Nat. Genet.">
        <title>Complete sequencing and characterization of 21,243 full-length human cDNAs.</title>
        <authorList>
            <person name="Ota T."/>
            <person name="Suzuki Y."/>
            <person name="Nishikawa T."/>
            <person name="Otsuki T."/>
            <person name="Sugiyama T."/>
            <person name="Irie R."/>
            <person name="Wakamatsu A."/>
            <person name="Hayashi K."/>
            <person name="Sato H."/>
            <person name="Nagai K."/>
            <person name="Kimura K."/>
            <person name="Makita H."/>
            <person name="Sekine M."/>
            <person name="Obayashi M."/>
            <person name="Nishi T."/>
            <person name="Shibahara T."/>
            <person name="Tanaka T."/>
            <person name="Ishii S."/>
            <person name="Yamamoto J."/>
            <person name="Saito K."/>
            <person name="Kawai Y."/>
            <person name="Isono Y."/>
            <person name="Nakamura Y."/>
            <person name="Nagahari K."/>
            <person name="Murakami K."/>
            <person name="Yasuda T."/>
            <person name="Iwayanagi T."/>
            <person name="Wagatsuma M."/>
            <person name="Shiratori A."/>
            <person name="Sudo H."/>
            <person name="Hosoiri T."/>
            <person name="Kaku Y."/>
            <person name="Kodaira H."/>
            <person name="Kondo H."/>
            <person name="Sugawara M."/>
            <person name="Takahashi M."/>
            <person name="Kanda K."/>
            <person name="Yokoi T."/>
            <person name="Furuya T."/>
            <person name="Kikkawa E."/>
            <person name="Omura Y."/>
            <person name="Abe K."/>
            <person name="Kamihara K."/>
            <person name="Katsuta N."/>
            <person name="Sato K."/>
            <person name="Tanikawa M."/>
            <person name="Yamazaki M."/>
            <person name="Ninomiya K."/>
            <person name="Ishibashi T."/>
            <person name="Yamashita H."/>
            <person name="Murakawa K."/>
            <person name="Fujimori K."/>
            <person name="Tanai H."/>
            <person name="Kimata M."/>
            <person name="Watanabe M."/>
            <person name="Hiraoka S."/>
            <person name="Chiba Y."/>
            <person name="Ishida S."/>
            <person name="Ono Y."/>
            <person name="Takiguchi S."/>
            <person name="Watanabe S."/>
            <person name="Yosida M."/>
            <person name="Hotuta T."/>
            <person name="Kusano J."/>
            <person name="Kanehori K."/>
            <person name="Takahashi-Fujii A."/>
            <person name="Hara H."/>
            <person name="Tanase T.-O."/>
            <person name="Nomura Y."/>
            <person name="Togiya S."/>
            <person name="Komai F."/>
            <person name="Hara R."/>
            <person name="Takeuchi K."/>
            <person name="Arita M."/>
            <person name="Imose N."/>
            <person name="Musashino K."/>
            <person name="Yuuki H."/>
            <person name="Oshima A."/>
            <person name="Sasaki N."/>
            <person name="Aotsuka S."/>
            <person name="Yoshikawa Y."/>
            <person name="Matsunawa H."/>
            <person name="Ichihara T."/>
            <person name="Shiohata N."/>
            <person name="Sano S."/>
            <person name="Moriya S."/>
            <person name="Momiyama H."/>
            <person name="Satoh N."/>
            <person name="Takami S."/>
            <person name="Terashima Y."/>
            <person name="Suzuki O."/>
            <person name="Nakagawa S."/>
            <person name="Senoh A."/>
            <person name="Mizoguchi H."/>
            <person name="Goto Y."/>
            <person name="Shimizu F."/>
            <person name="Wakebe H."/>
            <person name="Hishigaki H."/>
            <person name="Watanabe T."/>
            <person name="Sugiyama A."/>
            <person name="Takemoto M."/>
            <person name="Kawakami B."/>
            <person name="Yamazaki M."/>
            <person name="Watanabe K."/>
            <person name="Kumagai A."/>
            <person name="Itakura S."/>
            <person name="Fukuzumi Y."/>
            <person name="Fujimori Y."/>
            <person name="Komiyama M."/>
            <person name="Tashiro H."/>
            <person name="Tanigami A."/>
            <person name="Fujiwara T."/>
            <person name="Ono T."/>
            <person name="Yamada K."/>
            <person name="Fujii Y."/>
            <person name="Ozaki K."/>
            <person name="Hirao M."/>
            <person name="Ohmori Y."/>
            <person name="Kawabata A."/>
            <person name="Hikiji T."/>
            <person name="Kobatake N."/>
            <person name="Inagaki H."/>
            <person name="Ikema Y."/>
            <person name="Okamoto S."/>
            <person name="Okitani R."/>
            <person name="Kawakami T."/>
            <person name="Noguchi S."/>
            <person name="Itoh T."/>
            <person name="Shigeta K."/>
            <person name="Senba T."/>
            <person name="Matsumura K."/>
            <person name="Nakajima Y."/>
            <person name="Mizuno T."/>
            <person name="Morinaga M."/>
            <person name="Sasaki M."/>
            <person name="Togashi T."/>
            <person name="Oyama M."/>
            <person name="Hata H."/>
            <person name="Watanabe M."/>
            <person name="Komatsu T."/>
            <person name="Mizushima-Sugano J."/>
            <person name="Satoh T."/>
            <person name="Shirai Y."/>
            <person name="Takahashi Y."/>
            <person name="Nakagawa K."/>
            <person name="Okumura K."/>
            <person name="Nagase T."/>
            <person name="Nomura N."/>
            <person name="Kikuchi H."/>
            <person name="Masuho Y."/>
            <person name="Yamashita R."/>
            <person name="Nakai K."/>
            <person name="Yada T."/>
            <person name="Nakamura Y."/>
            <person name="Ohara O."/>
            <person name="Isogai T."/>
            <person name="Sugano S."/>
        </authorList>
    </citation>
    <scope>NUCLEOTIDE SEQUENCE [LARGE SCALE MRNA]</scope>
    <scope>VARIANTS PHE-540; ILE-575 AND LYS-999</scope>
    <source>
        <tissue>Hippocampus</tissue>
        <tissue>Placenta</tissue>
    </source>
</reference>
<reference key="5">
    <citation type="journal article" date="2004" name="Genome Res.">
        <title>The status, quality, and expansion of the NIH full-length cDNA project: the Mammalian Gene Collection (MGC).</title>
        <authorList>
            <consortium name="The MGC Project Team"/>
        </authorList>
    </citation>
    <scope>NUCLEOTIDE SEQUENCE [LARGE SCALE MRNA] OF 1-1369</scope>
    <scope>VARIANT ILE-575</scope>
    <source>
        <tissue>Lymph</tissue>
        <tissue>Testis</tissue>
    </source>
</reference>
<reference key="6">
    <citation type="journal article" date="1997" name="Mamm. Genome">
        <title>CAND3: a ubiquitously expressed gene immediately adjacent and in opposite transcriptional orientation to the ATM gene at 11q23.1.</title>
        <authorList>
            <person name="Chen X."/>
            <person name="Yang L."/>
            <person name="Udar N."/>
            <person name="Liang T."/>
            <person name="Uhrhammer N."/>
            <person name="Xu S."/>
            <person name="Bay J.-O."/>
            <person name="Wang Z."/>
            <person name="Dandakar S."/>
            <person name="Chiplunkar S."/>
            <person name="Klisak I."/>
            <person name="Telatar M."/>
            <person name="Yang H."/>
            <person name="Concannon P."/>
            <person name="Gatti R.A."/>
        </authorList>
    </citation>
    <scope>NUCLEOTIDE SEQUENCE [MRNA] OF 1-1169</scope>
</reference>
<reference key="7">
    <citation type="journal article" date="1998" name="Genes Dev.">
        <title>Expression of NPAT, a novel substrate of cyclin E-CDK2, promotes S-phase entry.</title>
        <authorList>
            <person name="Zhao J."/>
            <person name="Dynlacht B."/>
            <person name="Imai T."/>
            <person name="Hori T."/>
            <person name="Harlow E."/>
        </authorList>
    </citation>
    <scope>FUNCTION</scope>
    <scope>INTERACTION WITH CCNE1 AND CDK2</scope>
    <scope>DEVELOPMENTAL STAGE</scope>
    <scope>PHOSPHORYLATION</scope>
</reference>
<reference key="8">
    <citation type="journal article" date="2000" name="Genes Dev.">
        <title>NPAT links cyclin E-Cdk2 to the regulation of replication-dependent histone gene transcription.</title>
        <authorList>
            <person name="Zhao J."/>
            <person name="Kennedy B.K."/>
            <person name="Lawrence B.D."/>
            <person name="Barbie D.A."/>
            <person name="Matera A.G."/>
            <person name="Fletcher J.A."/>
            <person name="Harlow E."/>
        </authorList>
    </citation>
    <scope>FUNCTION</scope>
    <scope>SUBCELLULAR LOCATION</scope>
</reference>
<reference key="9">
    <citation type="journal article" date="2000" name="Genes Dev.">
        <title>Cell cycle-regulated phosphorylation of p220(NPAT) by cyclin E/Cdk2 in Cajal bodies promotes histone gene transcription.</title>
        <authorList>
            <person name="Ma T."/>
            <person name="Van Tine B.A."/>
            <person name="Wei Y."/>
            <person name="Garrett M.D."/>
            <person name="Nelson D."/>
            <person name="Adams P.D."/>
            <person name="Wang J."/>
            <person name="Qin J."/>
            <person name="Chow L.T."/>
            <person name="Harper J.W."/>
        </authorList>
    </citation>
    <scope>FUNCTION</scope>
    <scope>IDENTIFICATION BY MASS SPECTROMETRY</scope>
    <scope>INTERACTION WITH CCNA1; CCNE1 AND CDK2</scope>
    <scope>SUBCELLULAR LOCATION</scope>
    <scope>PHOSPHORYLATION AT SER-775; SER-779; SER-1100; THR-1270 AND THR-1350 BY CDK2</scope>
    <scope>MUTAGENESIS OF SER-775; SER-779; SER-1100; THR-1270 AND THR-1350</scope>
</reference>
<reference key="10">
    <citation type="journal article" date="2002" name="Oncogene">
        <title>Aberrant methylation of the ATM promoter correlates with increased radiosensitivity in a human colorectal tumor cell line.</title>
        <authorList>
            <person name="Kim W.-J."/>
            <person name="Vo Q.N."/>
            <person name="Shrivastav M."/>
            <person name="Lataxes T.A."/>
            <person name="Brown K.D."/>
        </authorList>
    </citation>
    <scope>SUBCELLULAR LOCATION</scope>
</reference>
<reference key="11">
    <citation type="journal article" date="2003" name="Cell">
        <title>S phase activation of the histone H2B promoter by OCA-S, a coactivator complex that contains GAPDH as a key component.</title>
        <authorList>
            <person name="Zheng L."/>
            <person name="Roeder R.G."/>
            <person name="Luo Y."/>
        </authorList>
    </citation>
    <scope>INTERACTION WITH GAPDH; NME1; NME2 AND STIP1</scope>
</reference>
<reference key="12">
    <citation type="journal article" date="2003" name="Mol. Cell. Biol.">
        <title>NPAT expression is regulated by E2F and is essential for cell cycle progression.</title>
        <authorList>
            <person name="Gao G."/>
            <person name="Bracken A.P."/>
            <person name="Burkard K."/>
            <person name="Pasini D."/>
            <person name="Classon M."/>
            <person name="Attwooll C."/>
            <person name="Sagara M."/>
            <person name="Imai T."/>
            <person name="Helin K."/>
            <person name="Zhao J."/>
        </authorList>
    </citation>
    <scope>FUNCTION</scope>
    <scope>SUBCELLULAR LOCATION</scope>
    <scope>INDUCTION</scope>
</reference>
<reference key="13">
    <citation type="journal article" date="2003" name="Mol. Cell. Biol.">
        <title>The cyclin E/Cdk2 substrate and Cajal body component p220(NPAT) activates histone transcription through a novel LisH-like domain.</title>
        <authorList>
            <person name="Wei Y."/>
            <person name="Jin J."/>
            <person name="Harper J.W."/>
        </authorList>
    </citation>
    <scope>FUNCTION</scope>
    <scope>SUBCELLULAR LOCATION</scope>
    <scope>DOMAIN</scope>
    <scope>MUTAGENESIS OF VAL-7; LEU-10; VAL-11; LEU-15; GLU-18; PHE-27 AND GLU-30</scope>
</reference>
<reference key="14">
    <citation type="journal article" date="2003" name="Mol. Cell. Biol.">
        <title>Identification of HiNF-P, a key activator of cell cycle-controlled histone H4 genes at the onset of S phase.</title>
        <authorList>
            <person name="Mitra P."/>
            <person name="Xie R.-L."/>
            <person name="Medina R."/>
            <person name="Hovhannisyan H."/>
            <person name="Zaidi S.K."/>
            <person name="Wei Y."/>
            <person name="Harper J.W."/>
            <person name="Stein J.L."/>
            <person name="van Wijnen A.J."/>
            <person name="Stein G.S."/>
        </authorList>
    </citation>
    <scope>FUNCTION</scope>
    <scope>MUTAGENESIS OF SER-775; SER-779; SER-1100; THR-1270 AND THR-1350</scope>
</reference>
<reference key="15">
    <citation type="journal article" date="2003" name="Mol. Cell. Biol.">
        <title>The cyclin E/Cdk2 substrate p220(NPAT) is required for S-phase entry, histone gene expression, and Cajal body maintenance in human somatic cells.</title>
        <authorList>
            <person name="Ye X."/>
            <person name="Wei Y."/>
            <person name="Nalepa G."/>
            <person name="Harper J.W."/>
        </authorList>
    </citation>
    <scope>FUNCTION</scope>
    <scope>SUBCELLULAR LOCATION</scope>
</reference>
<reference key="16">
    <citation type="journal article" date="2004" name="Biochem. Biophys. Res. Commun.">
        <title>Dynamic interaction of p220(NPAT) and CBP/p300 promotes S-phase entry.</title>
        <authorList>
            <person name="Wang A."/>
            <person name="Ikura T."/>
            <person name="Eto K."/>
            <person name="Ota M.S."/>
        </authorList>
    </citation>
    <scope>FUNCTION</scope>
    <scope>INTERACTION WITH CCNE1 AND CREBBP</scope>
    <scope>SUBCELLULAR LOCATION</scope>
    <scope>MUTAGENESIS OF SER-775; SER-779; SER-1100; THR-1270 AND THR-1350</scope>
</reference>
<reference key="17">
    <citation type="journal article" date="2004" name="EMBO J.">
        <title>DNA damage induces downregulation of histone gene expression through the G1 checkpoint pathway.</title>
        <authorList>
            <person name="Su C."/>
            <person name="Gao G."/>
            <person name="Schneider S."/>
            <person name="Helt C."/>
            <person name="Weiss C."/>
            <person name="O'Reilly M.A."/>
            <person name="Bohmann D."/>
            <person name="Zhao J."/>
        </authorList>
    </citation>
    <scope>SUBCELLULAR LOCATION</scope>
    <scope>PHOSPHORYLATION</scope>
</reference>
<reference key="18">
    <citation type="journal article" date="2005" name="J. Biol. Chem.">
        <title>Coordinate control and selective expression of the full complement of replication-dependent histone H4 genes in normal and cancer cells.</title>
        <authorList>
            <person name="Holmes W.F."/>
            <person name="Braastad C.D."/>
            <person name="Mitra P."/>
            <person name="Hampe C."/>
            <person name="Doenecke D."/>
            <person name="Albig W."/>
            <person name="Stein J.L."/>
            <person name="van Wijnen A.J."/>
            <person name="Stein G.S."/>
        </authorList>
    </citation>
    <scope>FUNCTION</scope>
</reference>
<reference key="19">
    <citation type="journal article" date="2005" name="Mol. Cell. Biol.">
        <title>HiNF-P directly links the cyclin E/CDK2/p220NPAT pathway to histone H4 gene regulation at the G1/S phase cell cycle transition.</title>
        <authorList>
            <person name="Miele A."/>
            <person name="Braastad C.D."/>
            <person name="Holmes W.F."/>
            <person name="Mitra P."/>
            <person name="Medina R."/>
            <person name="Xie R.-L."/>
            <person name="Zaidi S.K."/>
            <person name="Ye X."/>
            <person name="Wei Y."/>
            <person name="Harper J.W."/>
            <person name="van Wijnen A.J."/>
            <person name="Stein J.L."/>
            <person name="Stein G.S."/>
        </authorList>
    </citation>
    <scope>FUNCTION</scope>
    <scope>INTERACTION WITH MIZF</scope>
    <scope>SUBCELLULAR LOCATION</scope>
</reference>
<reference key="20">
    <citation type="journal article" date="2006" name="J. Biol. Chem.">
        <title>Deficiency of the zinc finger protein ZPR1 causes defects in transcription and cell cycle progression.</title>
        <authorList>
            <person name="Gangwani L."/>
        </authorList>
    </citation>
    <scope>SUBCELLULAR LOCATION</scope>
</reference>
<reference key="21">
    <citation type="journal article" date="2006" name="J. Cell. Physiol.">
        <title>Self-renewal of human embryonic stem cells is supported by a shortened G1 cell cycle phase.</title>
        <authorList>
            <person name="Becker K.A."/>
            <person name="Ghule P.N."/>
            <person name="Therrien J.A."/>
            <person name="Lian J.B."/>
            <person name="Stein J.L."/>
            <person name="van Wijnen A.J."/>
            <person name="Stein G.S."/>
        </authorList>
    </citation>
    <scope>SUBCELLULAR LOCATION</scope>
</reference>
<reference key="22">
    <citation type="journal article" date="2006" name="Proc. Natl. Acad. Sci. U.S.A.">
        <title>FLASH is required for histone transcription and S-phase progression.</title>
        <authorList>
            <person name="Barcaroli D."/>
            <person name="Bongiorno-Borbone L."/>
            <person name="Terrinoni A."/>
            <person name="Hofmann T.G."/>
            <person name="Rossi M."/>
            <person name="Knight R.A."/>
            <person name="Matera A.G."/>
            <person name="Melino G."/>
            <person name="De Laurenzi V."/>
        </authorList>
    </citation>
    <scope>INTERACTION WITH CASP8AP2</scope>
    <scope>SUBCELLULAR LOCATION</scope>
</reference>
<reference key="23">
    <citation type="journal article" date="2007" name="Cancer Res.">
        <title>The HiNF-P/p220NPAT cell cycle signaling pathway controls nonhistone target genes.</title>
        <authorList>
            <person name="Medina R."/>
            <person name="van der Deen M."/>
            <person name="Miele-Chamberland A."/>
            <person name="Xie R.-L."/>
            <person name="van Wijnen A.J."/>
            <person name="Stein J.L."/>
            <person name="Stein G.S."/>
        </authorList>
    </citation>
    <scope>FUNCTION</scope>
</reference>
<reference key="24">
    <citation type="journal article" date="2007" name="Gene">
        <title>Transcriptional activation of the histone nuclear factor P (HiNF-P) gene by HiNF-P and its cyclin E/CDK2 responsive co-factor p220NPAT defines a novel autoregulatory loop at the G1/S phase transition.</title>
        <authorList>
            <person name="Xie R.-L."/>
            <person name="Liu L."/>
            <person name="Mitra P."/>
            <person name="Stein J.L."/>
            <person name="van Wijnen A.J."/>
            <person name="Stein G.S."/>
        </authorList>
    </citation>
    <scope>FUNCTION</scope>
</reference>
<reference key="25">
    <citation type="journal article" date="2007" name="J. Cell. Biochem.">
        <title>HiNF-P is a bifunctional regulator of cell cycle controlled histone H4 gene transcription.</title>
        <authorList>
            <person name="Mitra P."/>
            <person name="Xie R.-L."/>
            <person name="Harper J.W."/>
            <person name="Stein J.L."/>
            <person name="Stein G.S."/>
            <person name="van Wijnen A.J."/>
        </authorList>
    </citation>
    <scope>FUNCTION</scope>
    <scope>MUTAGENESIS OF SER-775; SER-779; SER-1100; THR-1270 AND THR-1350</scope>
</reference>
<reference key="26">
    <citation type="journal article" date="2007" name="J. Cell. Physiol.">
        <title>Establishment of histone gene regulation and cell cycle checkpoint control in human embryonic stem cells.</title>
        <authorList>
            <person name="Becker K.A."/>
            <person name="Stein J.L."/>
            <person name="Lian J.B."/>
            <person name="van Wijnen A.J."/>
            <person name="Stein G.S."/>
        </authorList>
    </citation>
    <scope>DEVELOPMENTAL STAGE</scope>
    <scope>INDUCTION</scope>
</reference>
<reference key="27">
    <citation type="journal article" date="2007" name="J. Cell. Physiol.">
        <title>Cell cycle dependent phosphorylation and subnuclear organization of the histone gene regulator p220(NPAT) in human embryonic stem cells.</title>
        <authorList>
            <person name="Ghule P.N."/>
            <person name="Becker K.A."/>
            <person name="Harper J.W."/>
            <person name="Lian J.B."/>
            <person name="Stein J.L."/>
            <person name="van Wijnen A.J."/>
            <person name="Stein G.S."/>
        </authorList>
    </citation>
    <scope>SUBCELLULAR LOCATION</scope>
</reference>
<reference key="28">
    <citation type="journal article" date="2008" name="Mol. Cell. Biol.">
        <title>Transcriptional activation of histone genes requires NPAT-dependent recruitment of TRRAP-Tip60 complex to histone promoters during the G1/S phase transition.</title>
        <authorList>
            <person name="DeRan M."/>
            <person name="Pulvino M."/>
            <person name="Greene E."/>
            <person name="Su C."/>
            <person name="Zhao J."/>
        </authorList>
    </citation>
    <scope>FUNCTION</scope>
    <scope>INTERACTION WITH BZW1; RUVBL1; RUVBL2; TRRAP AND YY1</scope>
    <scope>MUTAGENESIS OF 331-LEU--ASP-333</scope>
</reference>
<reference key="29">
    <citation type="journal article" date="2009" name="Anal. Chem.">
        <title>Lys-N and trypsin cover complementary parts of the phosphoproteome in a refined SCX-based approach.</title>
        <authorList>
            <person name="Gauci S."/>
            <person name="Helbig A.O."/>
            <person name="Slijper M."/>
            <person name="Krijgsveld J."/>
            <person name="Heck A.J."/>
            <person name="Mohammed S."/>
        </authorList>
    </citation>
    <scope>IDENTIFICATION BY MASS SPECTROMETRY [LARGE SCALE ANALYSIS]</scope>
</reference>
<reference key="30">
    <citation type="journal article" date="2009" name="Science">
        <title>Lysine acetylation targets protein complexes and co-regulates major cellular functions.</title>
        <authorList>
            <person name="Choudhary C."/>
            <person name="Kumar C."/>
            <person name="Gnad F."/>
            <person name="Nielsen M.L."/>
            <person name="Rehman M."/>
            <person name="Walther T.C."/>
            <person name="Olsen J.V."/>
            <person name="Mann M."/>
        </authorList>
    </citation>
    <scope>ACETYLATION [LARGE SCALE ANALYSIS] AT LYS-1228</scope>
    <scope>IDENTIFICATION BY MASS SPECTROMETRY [LARGE SCALE ANALYSIS]</scope>
</reference>
<reference key="31">
    <citation type="journal article" date="2010" name="Sci. Signal.">
        <title>Quantitative phosphoproteomics reveals widespread full phosphorylation site occupancy during mitosis.</title>
        <authorList>
            <person name="Olsen J.V."/>
            <person name="Vermeulen M."/>
            <person name="Santamaria A."/>
            <person name="Kumar C."/>
            <person name="Miller M.L."/>
            <person name="Jensen L.J."/>
            <person name="Gnad F."/>
            <person name="Cox J."/>
            <person name="Jensen T.S."/>
            <person name="Nigg E.A."/>
            <person name="Brunak S."/>
            <person name="Mann M."/>
        </authorList>
    </citation>
    <scope>IDENTIFICATION BY MASS SPECTROMETRY [LARGE SCALE ANALYSIS]</scope>
    <source>
        <tissue>Cervix carcinoma</tissue>
    </source>
</reference>
<reference key="32">
    <citation type="journal article" date="2013" name="J. Proteome Res.">
        <title>Toward a comprehensive characterization of a human cancer cell phosphoproteome.</title>
        <authorList>
            <person name="Zhou H."/>
            <person name="Di Palma S."/>
            <person name="Preisinger C."/>
            <person name="Peng M."/>
            <person name="Polat A.N."/>
            <person name="Heck A.J."/>
            <person name="Mohammed S."/>
        </authorList>
    </citation>
    <scope>PHOSPHORYLATION [LARGE SCALE ANALYSIS] AT SER-207; SER-554; SER-1151; SER-1200 AND THR-1350</scope>
    <scope>IDENTIFICATION BY MASS SPECTROMETRY [LARGE SCALE ANALYSIS]</scope>
    <source>
        <tissue>Cervix carcinoma</tissue>
        <tissue>Erythroleukemia</tissue>
    </source>
</reference>
<reference key="33">
    <citation type="journal article" date="2017" name="Nat. Struct. Mol. Biol.">
        <title>Site-specific mapping of the human SUMO proteome reveals co-modification with phosphorylation.</title>
        <authorList>
            <person name="Hendriks I.A."/>
            <person name="Lyon D."/>
            <person name="Young C."/>
            <person name="Jensen L.J."/>
            <person name="Vertegaal A.C."/>
            <person name="Nielsen M.L."/>
        </authorList>
    </citation>
    <scope>SUMOYLATION [LARGE SCALE ANALYSIS] AT LYS-1116; LYS-1149 AND LYS-1280</scope>
    <scope>IDENTIFICATION BY MASS SPECTROMETRY [LARGE SCALE ANALYSIS]</scope>
</reference>
<sequence length="1427" mass="154290">MLLPSDVARLVLGYLQQENLISTCQTFILESSDLKEYAEHCTDEGFIPACLLSLFGKNLTTILNEYVAMKTKETSNNVPAIMSSLWKKLDHTLSQIRSMQSSPRFAGSQRARTRTGIAEIKRQRKLASQTAPASAELLTLPYLSGQFTTPPSTGTQVTRPSGQISDPSRSYFVVVNHSQSQDTVTTGEALNVIPGAQEKKAHASLMSPGRRKSESQRKSTTLSGPHSTIRNFQDPNAFAVEKQMVIENAREKILSNKSLQEKLAENINKFLTSDNNIAQVPKQTDNNPTEPETSIDEFLGLPSEIHMSEEAIQDILEQTESDPAFQALFDLFDYGKTKNNKNISQSISSQPMESNPSIVLADETNLAVKGSFETEESDGQSGQPAFCTSYQNDDPLNALKNSNNHDVLRQEDQENFSQISTSIQKKAFKTAVPTEQKCDIDITFESVPNLNDFNQRGNSNAECNPHCAELYTNQMSTETEMAIGIEKNSLSSNVPSESQLQPDQPDIPITSFVSLGCEANNENLILSGKSSQLLSQDTSLTGKPSKKSQFCENSNDTVKLKINFHGSKSSDSSEVHKSKIEINVLEPVMSQLSNCQDNSCLQSEILPVSVESSHLNVSGQVEIHLGDSLSSTKQPSNDSASVELNHTENEAQASKSENSQEPSSSVKEENTIFLSLGGNANCEKVALTPPEGTPVENSHSLPPESVCSSVGDSHPESQNTDDKPSSNNSAEIDASNIVSLKVIISDDPFVSSDTELTSAVSSINGENLPTIILSSPTKSPTKNAELVKCLSSEETVGAVVYAEVGDSASMEQSLLTFKSEDSAVNNTQNEDGIAFSANVTPCVSKDGGYIQLMPATSTAFGNSNNILIATCVTDPTALGTSVSQSNVVVLPGNSAPMTAQPLPPQLQTPPRSNSVFAVNQAVSPNFSQGSAIIIASPVQPVLQGMVGMIPVSVVGQNGNNFSTPPRQVLHMPLTAPVCNRSIPQFPVPPKSQKAQGLRNKPCIGKQVNNLVDSSGHSVGCHAQKTEVSDKSIATDLGKKSEETTVPFPEESIVPAAKPCHRRVLCFDSTTAPVANTQGPNHKMVSQNKERNAVSFPNLDSPNVSSTLKPPSNNAIKREKEKPPLPKILSKSESAISRHTTIRETQSEKKVSPTEIVLESFHKATANKENELCSDVERQKNPENSKLSIGQQNGGLRSEKSIASLQEMTKKQGTSSNNKNVLSVGTAVKDLKQEQTKSASSLITTEMLQDIQRHSSVSRLADSSDLPVPRTPGSGAGEKHKEEPIDIIKAPSSRRFSEDSSTSKVMVPPVTPDLPACSPASETGSENSVNMAAHTLMILSRAAISRTTSATPLKDNTQQFRASSRSTTKKRKIEELDERERNSRPSSKNLTNSSIPMKKKKIKKKKLPSSFPAGMDVDKFLLSLHYDE</sequence>
<proteinExistence type="evidence at protein level"/>
<gene>
    <name type="primary">NPAT</name>
    <name type="synonym">CAND3</name>
    <name type="synonym">E14</name>
</gene>
<dbReference type="EMBL" id="D83243">
    <property type="protein sequence ID" value="BAA11861.1"/>
    <property type="molecule type" value="mRNA"/>
</dbReference>
<dbReference type="EMBL" id="X97186">
    <property type="protein sequence ID" value="CAA65824.1"/>
    <property type="molecule type" value="mRNA"/>
</dbReference>
<dbReference type="EMBL" id="D89854">
    <property type="protein sequence ID" value="BAA21367.1"/>
    <property type="molecule type" value="Genomic_DNA"/>
</dbReference>
<dbReference type="EMBL" id="AK290020">
    <property type="protein sequence ID" value="BAF82709.1"/>
    <property type="molecule type" value="mRNA"/>
</dbReference>
<dbReference type="EMBL" id="AK291687">
    <property type="protein sequence ID" value="BAF84376.1"/>
    <property type="molecule type" value="mRNA"/>
</dbReference>
<dbReference type="EMBL" id="BC040356">
    <property type="protein sequence ID" value="AAH40356.1"/>
    <property type="status" value="ALT_SEQ"/>
    <property type="molecule type" value="mRNA"/>
</dbReference>
<dbReference type="EMBL" id="BC050561">
    <property type="protein sequence ID" value="AAH50561.1"/>
    <property type="status" value="ALT_SEQ"/>
    <property type="molecule type" value="mRNA"/>
</dbReference>
<dbReference type="EMBL" id="U58852">
    <property type="protein sequence ID" value="AAB02735.1"/>
    <property type="status" value="ALT_SEQ"/>
    <property type="molecule type" value="mRNA"/>
</dbReference>
<dbReference type="CCDS" id="CCDS41710.1"/>
<dbReference type="RefSeq" id="NP_002510.2">
    <property type="nucleotide sequence ID" value="NM_002519.3"/>
</dbReference>
<dbReference type="SMR" id="Q14207"/>
<dbReference type="BioGRID" id="110924">
    <property type="interactions" value="69"/>
</dbReference>
<dbReference type="CORUM" id="Q14207"/>
<dbReference type="DIP" id="DIP-59961N"/>
<dbReference type="ELM" id="Q14207"/>
<dbReference type="FunCoup" id="Q14207">
    <property type="interactions" value="4482"/>
</dbReference>
<dbReference type="IntAct" id="Q14207">
    <property type="interactions" value="41"/>
</dbReference>
<dbReference type="STRING" id="9606.ENSP00000278612"/>
<dbReference type="GlyGen" id="Q14207">
    <property type="glycosylation" value="4 sites, 1 O-linked glycan (4 sites)"/>
</dbReference>
<dbReference type="iPTMnet" id="Q14207"/>
<dbReference type="PhosphoSitePlus" id="Q14207"/>
<dbReference type="BioMuta" id="NPAT"/>
<dbReference type="DMDM" id="296439285"/>
<dbReference type="jPOST" id="Q14207"/>
<dbReference type="MassIVE" id="Q14207"/>
<dbReference type="PaxDb" id="9606-ENSP00000278612"/>
<dbReference type="PeptideAtlas" id="Q14207"/>
<dbReference type="ProteomicsDB" id="59930"/>
<dbReference type="Pumba" id="Q14207"/>
<dbReference type="Antibodypedia" id="45544">
    <property type="antibodies" value="43 antibodies from 11 providers"/>
</dbReference>
<dbReference type="DNASU" id="4863"/>
<dbReference type="Ensembl" id="ENST00000278612.9">
    <property type="protein sequence ID" value="ENSP00000278612.8"/>
    <property type="gene ID" value="ENSG00000149308.18"/>
</dbReference>
<dbReference type="Ensembl" id="ENST00000850623.1">
    <property type="protein sequence ID" value="ENSP00000520908.1"/>
    <property type="gene ID" value="ENSG00000149308.18"/>
</dbReference>
<dbReference type="GeneID" id="4863"/>
<dbReference type="KEGG" id="hsa:4863"/>
<dbReference type="MANE-Select" id="ENST00000278612.9">
    <property type="protein sequence ID" value="ENSP00000278612.8"/>
    <property type="RefSeq nucleotide sequence ID" value="NM_002519.3"/>
    <property type="RefSeq protein sequence ID" value="NP_002510.2"/>
</dbReference>
<dbReference type="UCSC" id="uc001pjz.6">
    <property type="organism name" value="human"/>
</dbReference>
<dbReference type="AGR" id="HGNC:7896"/>
<dbReference type="CTD" id="4863"/>
<dbReference type="DisGeNET" id="4863"/>
<dbReference type="GeneCards" id="NPAT"/>
<dbReference type="HGNC" id="HGNC:7896">
    <property type="gene designation" value="NPAT"/>
</dbReference>
<dbReference type="HPA" id="ENSG00000149308">
    <property type="expression patterns" value="Low tissue specificity"/>
</dbReference>
<dbReference type="MalaCards" id="NPAT"/>
<dbReference type="MIM" id="601448">
    <property type="type" value="gene"/>
</dbReference>
<dbReference type="neXtProt" id="NX_Q14207"/>
<dbReference type="OpenTargets" id="ENSG00000149308"/>
<dbReference type="PharmGKB" id="PA31697"/>
<dbReference type="VEuPathDB" id="HostDB:ENSG00000149308"/>
<dbReference type="eggNOG" id="ENOG502QYUR">
    <property type="taxonomic scope" value="Eukaryota"/>
</dbReference>
<dbReference type="GeneTree" id="ENSGT00390000012388"/>
<dbReference type="HOGENOM" id="CLU_004845_0_0_1"/>
<dbReference type="InParanoid" id="Q14207"/>
<dbReference type="OMA" id="PMRSNFV"/>
<dbReference type="OrthoDB" id="6287635at2759"/>
<dbReference type="PAN-GO" id="Q14207">
    <property type="GO annotations" value="3 GO annotations based on evolutionary models"/>
</dbReference>
<dbReference type="PhylomeDB" id="Q14207"/>
<dbReference type="TreeFam" id="TF332825"/>
<dbReference type="PathwayCommons" id="Q14207"/>
<dbReference type="SignaLink" id="Q14207"/>
<dbReference type="SIGNOR" id="Q14207"/>
<dbReference type="BioGRID-ORCS" id="4863">
    <property type="hits" value="738 hits in 1165 CRISPR screens"/>
</dbReference>
<dbReference type="CD-CODE" id="24B72B50">
    <property type="entry name" value="Histone Locus Body"/>
</dbReference>
<dbReference type="CD-CODE" id="6F24707C">
    <property type="entry name" value="Cajal body"/>
</dbReference>
<dbReference type="ChiTaRS" id="NPAT">
    <property type="organism name" value="human"/>
</dbReference>
<dbReference type="GeneWiki" id="NPAT_(gene)"/>
<dbReference type="GenomeRNAi" id="4863"/>
<dbReference type="Pharos" id="Q14207">
    <property type="development level" value="Tbio"/>
</dbReference>
<dbReference type="PRO" id="PR:Q14207"/>
<dbReference type="Proteomes" id="UP000005640">
    <property type="component" value="Chromosome 11"/>
</dbReference>
<dbReference type="RNAct" id="Q14207">
    <property type="molecule type" value="protein"/>
</dbReference>
<dbReference type="Bgee" id="ENSG00000149308">
    <property type="expression patterns" value="Expressed in secondary oocyte and 195 other cell types or tissues"/>
</dbReference>
<dbReference type="ExpressionAtlas" id="Q14207">
    <property type="expression patterns" value="baseline and differential"/>
</dbReference>
<dbReference type="GO" id="GO:0015030">
    <property type="term" value="C:Cajal body"/>
    <property type="evidence" value="ECO:0000314"/>
    <property type="project" value="UniProtKB"/>
</dbReference>
<dbReference type="GO" id="GO:0005737">
    <property type="term" value="C:cytoplasm"/>
    <property type="evidence" value="ECO:0000314"/>
    <property type="project" value="UniProtKB"/>
</dbReference>
<dbReference type="GO" id="GO:0097504">
    <property type="term" value="C:Gemini of Cajal bodies"/>
    <property type="evidence" value="ECO:0000314"/>
    <property type="project" value="UniProtKB"/>
</dbReference>
<dbReference type="GO" id="GO:0005654">
    <property type="term" value="C:nucleoplasm"/>
    <property type="evidence" value="ECO:0000314"/>
    <property type="project" value="UniProtKB"/>
</dbReference>
<dbReference type="GO" id="GO:0005634">
    <property type="term" value="C:nucleus"/>
    <property type="evidence" value="ECO:0000314"/>
    <property type="project" value="UniProtKB"/>
</dbReference>
<dbReference type="GO" id="GO:0003713">
    <property type="term" value="F:transcription coactivator activity"/>
    <property type="evidence" value="ECO:0000314"/>
    <property type="project" value="UniProtKB"/>
</dbReference>
<dbReference type="GO" id="GO:0003712">
    <property type="term" value="F:transcription coregulator activity"/>
    <property type="evidence" value="ECO:0000318"/>
    <property type="project" value="GO_Central"/>
</dbReference>
<dbReference type="GO" id="GO:0003714">
    <property type="term" value="F:transcription corepressor activity"/>
    <property type="evidence" value="ECO:0000315"/>
    <property type="project" value="UniProtKB"/>
</dbReference>
<dbReference type="GO" id="GO:0044843">
    <property type="term" value="P:cell cycle G1/S phase transition"/>
    <property type="evidence" value="ECO:0000315"/>
    <property type="project" value="UniProtKB"/>
</dbReference>
<dbReference type="GO" id="GO:0001701">
    <property type="term" value="P:in utero embryonic development"/>
    <property type="evidence" value="ECO:0007669"/>
    <property type="project" value="Ensembl"/>
</dbReference>
<dbReference type="GO" id="GO:0045893">
    <property type="term" value="P:positive regulation of DNA-templated transcription"/>
    <property type="evidence" value="ECO:0000314"/>
    <property type="project" value="UniProtKB"/>
</dbReference>
<dbReference type="GO" id="GO:0045944">
    <property type="term" value="P:positive regulation of transcription by RNA polymerase II"/>
    <property type="evidence" value="ECO:0000314"/>
    <property type="project" value="ARUK-UCL"/>
</dbReference>
<dbReference type="InterPro" id="IPR006594">
    <property type="entry name" value="LisH"/>
</dbReference>
<dbReference type="InterPro" id="IPR031442">
    <property type="entry name" value="NPAT_C"/>
</dbReference>
<dbReference type="InterPro" id="IPR052850">
    <property type="entry name" value="NPAT_LisH"/>
</dbReference>
<dbReference type="PANTHER" id="PTHR15087">
    <property type="entry name" value="PROTEIN NPAT"/>
    <property type="match status" value="1"/>
</dbReference>
<dbReference type="PANTHER" id="PTHR15087:SF14">
    <property type="entry name" value="PROTEIN NPAT"/>
    <property type="match status" value="1"/>
</dbReference>
<dbReference type="Pfam" id="PF15712">
    <property type="entry name" value="NPAT_C"/>
    <property type="match status" value="1"/>
</dbReference>
<dbReference type="SMART" id="SM00667">
    <property type="entry name" value="LisH"/>
    <property type="match status" value="1"/>
</dbReference>
<dbReference type="PROSITE" id="PS50896">
    <property type="entry name" value="LISH"/>
    <property type="match status" value="1"/>
</dbReference>
<organism>
    <name type="scientific">Homo sapiens</name>
    <name type="common">Human</name>
    <dbReference type="NCBI Taxonomy" id="9606"/>
    <lineage>
        <taxon>Eukaryota</taxon>
        <taxon>Metazoa</taxon>
        <taxon>Chordata</taxon>
        <taxon>Craniata</taxon>
        <taxon>Vertebrata</taxon>
        <taxon>Euteleostomi</taxon>
        <taxon>Mammalia</taxon>
        <taxon>Eutheria</taxon>
        <taxon>Euarchontoglires</taxon>
        <taxon>Primates</taxon>
        <taxon>Haplorrhini</taxon>
        <taxon>Catarrhini</taxon>
        <taxon>Hominidae</taxon>
        <taxon>Homo</taxon>
    </lineage>
</organism>
<accession>Q14207</accession>
<accession>A8K1V5</accession>
<accession>A8K6M2</accession>
<accession>Q13632</accession>
<accession>Q14967</accession>
<accession>Q16580</accession>
<accession>Q86W55</accession>
<accession>Q8IWE9</accession>
<feature type="chain" id="PRO_0000318163" description="Protein NPAT">
    <location>
        <begin position="1"/>
        <end position="1427"/>
    </location>
</feature>
<feature type="domain" description="LisH" evidence="2">
    <location>
        <begin position="3"/>
        <end position="35"/>
    </location>
</feature>
<feature type="region of interest" description="Interaction with MIZF" evidence="15">
    <location>
        <begin position="1"/>
        <end position="318"/>
    </location>
</feature>
<feature type="region of interest" description="Required for activation of histone gene transcription and interaction with MIZF" evidence="15">
    <location>
        <begin position="5"/>
        <end position="25"/>
    </location>
</feature>
<feature type="region of interest" description="Required for activation of histone gene transcription and interaction with MIZF" evidence="15">
    <location>
        <begin position="121"/>
        <end position="145"/>
    </location>
</feature>
<feature type="region of interest" description="Disordered" evidence="3">
    <location>
        <begin position="199"/>
        <end position="231"/>
    </location>
</feature>
<feature type="region of interest" description="Mediates transcriptional activation">
    <location>
        <begin position="262"/>
        <end position="338"/>
    </location>
</feature>
<feature type="region of interest" description="Disordered" evidence="3">
    <location>
        <begin position="628"/>
        <end position="669"/>
    </location>
</feature>
<feature type="region of interest" description="Required for acceleration of G1 phase">
    <location>
        <begin position="629"/>
        <end position="653"/>
    </location>
</feature>
<feature type="region of interest" description="Disordered" evidence="3">
    <location>
        <begin position="683"/>
        <end position="732"/>
    </location>
</feature>
<feature type="region of interest" description="Required for acceleration of G1 phase">
    <location>
        <begin position="828"/>
        <end position="853"/>
    </location>
</feature>
<feature type="region of interest" description="Required for acceleration of G1 phase">
    <location>
        <begin position="1039"/>
        <end position="1054"/>
    </location>
</feature>
<feature type="region of interest" description="Disordered" evidence="3">
    <location>
        <begin position="1095"/>
        <end position="1121"/>
    </location>
</feature>
<feature type="region of interest" description="Disordered" evidence="3">
    <location>
        <begin position="1133"/>
        <end position="1152"/>
    </location>
</feature>
<feature type="region of interest" description="Required for acceleration of G1 phase">
    <location>
        <begin position="1228"/>
        <end position="1252"/>
    </location>
</feature>
<feature type="region of interest" description="Disordered" evidence="3">
    <location>
        <begin position="1253"/>
        <end position="1327"/>
    </location>
</feature>
<feature type="region of interest" description="Required for acceleration of G1 phase">
    <location>
        <begin position="1325"/>
        <end position="1349"/>
    </location>
</feature>
<feature type="region of interest" description="Disordered" evidence="3">
    <location>
        <begin position="1348"/>
        <end position="1413"/>
    </location>
</feature>
<feature type="compositionally biased region" description="Polar residues" evidence="3">
    <location>
        <begin position="218"/>
        <end position="231"/>
    </location>
</feature>
<feature type="compositionally biased region" description="Polar residues" evidence="3">
    <location>
        <begin position="628"/>
        <end position="644"/>
    </location>
</feature>
<feature type="compositionally biased region" description="Low complexity" evidence="3">
    <location>
        <begin position="654"/>
        <end position="665"/>
    </location>
</feature>
<feature type="compositionally biased region" description="Polar residues" evidence="3">
    <location>
        <begin position="695"/>
        <end position="711"/>
    </location>
</feature>
<feature type="compositionally biased region" description="Polar residues" evidence="3">
    <location>
        <begin position="1097"/>
        <end position="1114"/>
    </location>
</feature>
<feature type="compositionally biased region" description="Basic and acidic residues" evidence="3">
    <location>
        <begin position="1140"/>
        <end position="1151"/>
    </location>
</feature>
<feature type="compositionally biased region" description="Basic and acidic residues" evidence="3">
    <location>
        <begin position="1276"/>
        <end position="1285"/>
    </location>
</feature>
<feature type="compositionally biased region" description="Polar residues" evidence="3">
    <location>
        <begin position="1348"/>
        <end position="1365"/>
    </location>
</feature>
<feature type="compositionally biased region" description="Basic and acidic residues" evidence="3">
    <location>
        <begin position="1371"/>
        <end position="1382"/>
    </location>
</feature>
<feature type="compositionally biased region" description="Polar residues" evidence="3">
    <location>
        <begin position="1383"/>
        <end position="1394"/>
    </location>
</feature>
<feature type="compositionally biased region" description="Basic residues" evidence="3">
    <location>
        <begin position="1396"/>
        <end position="1406"/>
    </location>
</feature>
<feature type="modified residue" description="Phosphoserine" evidence="29">
    <location>
        <position position="207"/>
    </location>
</feature>
<feature type="modified residue" description="Phosphoserine" evidence="29">
    <location>
        <position position="554"/>
    </location>
</feature>
<feature type="modified residue" description="Phosphoserine" evidence="1">
    <location>
        <position position="599"/>
    </location>
</feature>
<feature type="modified residue" description="Phosphoserine; by CDK2" evidence="5">
    <location>
        <position position="775"/>
    </location>
</feature>
<feature type="modified residue" description="Phosphoserine; by CDK2" evidence="5">
    <location>
        <position position="779"/>
    </location>
</feature>
<feature type="modified residue" description="Phosphoserine; by CDK2" evidence="5">
    <location>
        <position position="1100"/>
    </location>
</feature>
<feature type="modified residue" description="Phosphoserine" evidence="29">
    <location>
        <position position="1151"/>
    </location>
</feature>
<feature type="modified residue" description="Phosphoserine" evidence="29">
    <location>
        <position position="1200"/>
    </location>
</feature>
<feature type="modified residue" description="N6-acetyllysine" evidence="28">
    <location>
        <position position="1228"/>
    </location>
</feature>
<feature type="modified residue" description="Phosphoserine" evidence="1">
    <location>
        <position position="1254"/>
    </location>
</feature>
<feature type="modified residue" description="Phosphothreonine; by CDK2" evidence="5">
    <location>
        <position position="1270"/>
    </location>
</feature>
<feature type="modified residue" description="Phosphothreonine; by CDK2" evidence="5 29">
    <location>
        <position position="1350"/>
    </location>
</feature>
<feature type="cross-link" description="Glycyl lysine isopeptide (Lys-Gly) (interchain with G-Cter in SUMO2)" evidence="30">
    <location>
        <position position="1116"/>
    </location>
</feature>
<feature type="cross-link" description="Glycyl lysine isopeptide (Lys-Gly) (interchain with G-Cter in SUMO2)" evidence="30">
    <location>
        <position position="1149"/>
    </location>
</feature>
<feature type="cross-link" description="Glycyl lysine isopeptide (Lys-Gly) (interchain with G-Cter in SUMO2)" evidence="30">
    <location>
        <position position="1280"/>
    </location>
</feature>
<feature type="sequence variant" id="VAR_038696" description="In dbSNP:rs1131748." evidence="24">
    <original>I</original>
    <variation>L</variation>
    <location>
        <position position="295"/>
    </location>
</feature>
<feature type="sequence variant" id="VAR_038697" description="In dbSNP:rs1051521." evidence="24">
    <original>L</original>
    <variation>M</variation>
    <location>
        <position position="399"/>
    </location>
</feature>
<feature type="sequence variant" id="VAR_038698" description="In dbSNP:rs35504388.">
    <original>V</original>
    <variation>M</variation>
    <location>
        <position position="447"/>
    </location>
</feature>
<feature type="sequence variant" id="VAR_038699" description="In dbSNP:rs968207.">
    <original>I</original>
    <variation>L</variation>
    <location>
        <position position="483"/>
    </location>
</feature>
<feature type="sequence variant" id="VAR_038700" description="In dbSNP:rs4144901." evidence="11">
    <original>L</original>
    <variation>F</variation>
    <location>
        <position position="540"/>
    </location>
</feature>
<feature type="sequence variant" id="VAR_038701" description="In dbSNP:rs2070661." evidence="11 13 23 24 25">
    <original>V</original>
    <variation>I</variation>
    <location>
        <position position="575"/>
    </location>
</feature>
<feature type="sequence variant" id="VAR_038702" description="In dbSNP:rs35095430.">
    <original>V</original>
    <variation>A</variation>
    <location>
        <position position="608"/>
    </location>
</feature>
<feature type="sequence variant" id="VAR_038703" description="In dbSNP:rs1051522." evidence="24">
    <original>V</original>
    <variation>I</variation>
    <location>
        <position position="621"/>
    </location>
</feature>
<feature type="sequence variant" id="VAR_038704" description="In dbSNP:rs1131750." evidence="24">
    <original>Q</original>
    <variation>E</variation>
    <location>
        <position position="967"/>
    </location>
</feature>
<feature type="sequence variant" id="VAR_038705" description="In dbSNP:rs1131751." evidence="24">
    <original>L</original>
    <variation>V</variation>
    <location>
        <position position="973"/>
    </location>
</feature>
<feature type="sequence variant" id="VAR_038706" description="In dbSNP:rs1051524." evidence="24">
    <original>V</original>
    <variation>A</variation>
    <location>
        <position position="987"/>
    </location>
</feature>
<feature type="sequence variant" id="VAR_038707" description="In dbSNP:rs34052882." evidence="11">
    <original>N</original>
    <variation>K</variation>
    <location>
        <position position="999"/>
    </location>
</feature>
<feature type="sequence variant" id="VAR_038708" description="In dbSNP:rs1051525." evidence="24">
    <original>Q</original>
    <variation>R</variation>
    <location>
        <position position="1191"/>
    </location>
</feature>
<feature type="mutagenesis site" description="Impairs activation of histone gene transcription; when associated with A-10; A-11; A-15 and A-18." evidence="7">
    <original>V</original>
    <variation>A</variation>
    <location>
        <position position="7"/>
    </location>
</feature>
<feature type="mutagenesis site" description="Impairs activation of histone gene transcription; when associated with A-7; A-11; A-15 and A-18." evidence="7">
    <original>L</original>
    <variation>A</variation>
    <location>
        <position position="10"/>
    </location>
</feature>
<feature type="mutagenesis site" description="Impairs activation of histone gene transcription; when associated with A-7; A-10; A-15 and A-18." evidence="7">
    <original>V</original>
    <variation>A</variation>
    <location>
        <position position="11"/>
    </location>
</feature>
<feature type="mutagenesis site" description="Impairs activation of histone gene transcription; when associated with A-7; A-10; A-11 and A-18." evidence="7">
    <original>L</original>
    <variation>A</variation>
    <location>
        <position position="15"/>
    </location>
</feature>
<feature type="mutagenesis site" description="Impairs activation of histone gene transcription; when associated with A-7; A-10; A-11 and A-15." evidence="7">
    <original>E</original>
    <variation>A</variation>
    <location>
        <position position="18"/>
    </location>
</feature>
<feature type="mutagenesis site" description="Impairs activation of histone gene transcription; when associated with A-30." evidence="7">
    <original>F</original>
    <variation>A</variation>
    <location>
        <position position="27"/>
    </location>
</feature>
<feature type="mutagenesis site" description="Impairs activation of histone gene transcription; when associated with A-27." evidence="7">
    <original>E</original>
    <variation>A</variation>
    <location>
        <position position="30"/>
    </location>
</feature>
<feature type="mutagenesis site" description="Impairs activation of histone gene transcription. Impairs interaction with BZW1, RUVBL1, RUVBL2 and TRRAP." evidence="21">
    <original>LFD</original>
    <variation>AAA</variation>
    <location>
        <begin position="331"/>
        <end position="333"/>
    </location>
</feature>
<feature type="mutagenesis site" description="Impairs activation of histone gene transcription; when associated with A-779; A-1100; A-1270 and A-1350." evidence="5 9 14 19">
    <original>S</original>
    <variation>A</variation>
    <location>
        <position position="775"/>
    </location>
</feature>
<feature type="mutagenesis site" description="Impairs activation of histone gene transcription; when associated with A-775; A-1100; A-1270 and A-1350." evidence="5 9 14 19">
    <original>S</original>
    <variation>A</variation>
    <location>
        <position position="779"/>
    </location>
</feature>
<feature type="mutagenesis site" description="Impairs activation of histone gene transcription; when associated with A-775; A-779; A-1270 and A-1350." evidence="5 9 14 19">
    <original>S</original>
    <variation>A</variation>
    <location>
        <position position="1100"/>
    </location>
</feature>
<feature type="mutagenesis site" description="Impairs activation of histone gene transcription; when associated with A-775; A-779; A-1100 and A-1350." evidence="5 9 14 19">
    <original>T</original>
    <variation>A</variation>
    <location>
        <position position="1270"/>
    </location>
</feature>
<feature type="mutagenesis site" description="Impairs activation of histone gene transcription; when associated with A-775; A-779; A-1100 and A-1270." evidence="5 9 14 19">
    <original>T</original>
    <variation>A</variation>
    <location>
        <position position="1350"/>
    </location>
</feature>
<feature type="sequence conflict" description="In Ref. 6; AAB02735." evidence="27" ref="6">
    <original>S</original>
    <variation>Y</variation>
    <location>
        <position position="22"/>
    </location>
</feature>
<feature type="sequence conflict" description="In Ref. 4; BAF84376." evidence="27" ref="4">
    <original>S</original>
    <variation>N</variation>
    <location>
        <position position="101"/>
    </location>
</feature>
<feature type="sequence conflict" description="In Ref. 4; BAF84376." evidence="27" ref="4">
    <original>F</original>
    <variation>L</variation>
    <location>
        <position position="329"/>
    </location>
</feature>
<feature type="sequence conflict" description="In Ref. 2; CAA65824." evidence="27" ref="2">
    <original>Y</original>
    <variation>N</variation>
    <location>
        <position position="471"/>
    </location>
</feature>
<feature type="sequence conflict" description="In Ref. 4; BAF82709." evidence="27" ref="4">
    <original>E</original>
    <variation>G</variation>
    <location>
        <position position="785"/>
    </location>
</feature>
<feature type="sequence conflict" description="In Ref. 4; BAF82709." evidence="27" ref="4">
    <original>Q</original>
    <variation>R</variation>
    <location>
        <position position="1145"/>
    </location>
</feature>
<comment type="function">
    <text evidence="4 5 6 7 9 10 14 15 16 19 20 21 22 26">Required for progression through the G1 and S phases of the cell cycle and for S phase entry. Activates transcription of the histone H2A, histone H2B, histone H3 and histone H4 genes in conjunction with MIZF. Also positively regulates the ATM, MIZF and PRKDC promoters. Transcriptional activation may be accomplished at least in part by the recruitment of the NuA4 histone acetyltransferase (HAT) complex to target gene promoters.</text>
</comment>
<comment type="subunit">
    <text evidence="5 8 14 15 17 21 26">Interacts with the cylin/CDK complexes CCNE1/CDK2 and CCNA1/CDK2. Interacts with BZW1, CASP8AP2, CREBBP, MIZF and YY1. Interacts with the RUVBL1, RUVBL2 and TRRAP subunits of the NuA4 complex. May also interact with GAPDH, NME1, NME2 and STIP1.</text>
</comment>
<comment type="subcellular location">
    <subcellularLocation>
        <location>Nucleus</location>
    </subcellularLocation>
    <subcellularLocation>
        <location>Nucleus</location>
        <location>Cajal body</location>
    </subcellularLocation>
    <text>Concentrates in two Cajal bodies tethered to histone gene clusters at chromosome 6p21 during G1, S and G2 phases. Also concentrates in two additional Cajal bodies tethered to histone gene clusters at chromosome 1q21 specifically during S and G2 phases.</text>
</comment>
<comment type="tissue specificity">
    <text evidence="23 24">Ubiquitously expressed.</text>
</comment>
<comment type="developmental stage">
    <text evidence="18 26">Expressed throughout the cell cycle. Expression peaks at the G1/S phase boundary and declines during S phase.</text>
</comment>
<comment type="induction">
    <text evidence="6 18">By expression of E2F1, E2F2, E2F3 and E2F4. Expression is reduced in response to radiation-induced DNA damage.</text>
</comment>
<comment type="domain">
    <text evidence="7">The LisH domain is required for the activation of histone gene transcription.</text>
</comment>
<comment type="PTM">
    <text evidence="5 12 26">Phosphorylated at Ser-775, Ser-779, Ser-1100, Thr-1270 and Thr-1350 by CCNE1/CDK2 at G1-S transition and until prophase, which promotes association with histone gene clusters and stimulates activation of histone transcription. Also phosphorylated by CCNA1/CDK2 in vitro.</text>
</comment>
<comment type="similarity">
    <text evidence="27">Belongs to the NPAT family.</text>
</comment>
<comment type="sequence caution" evidence="27">
    <conflict type="miscellaneous discrepancy">
        <sequence resource="EMBL-CDS" id="AAB02735"/>
    </conflict>
    <text>Chimeric cDNA. A chimeric cDNA originating from chromosomes 11 and 4.</text>
</comment>
<comment type="sequence caution" evidence="27">
    <conflict type="miscellaneous discrepancy">
        <sequence resource="EMBL-CDS" id="AAH40356"/>
    </conflict>
    <text>Contaminating sequence. Potential poly-A sequence.</text>
</comment>
<comment type="sequence caution" evidence="27">
    <conflict type="miscellaneous discrepancy">
        <sequence resource="EMBL-CDS" id="AAH50561"/>
    </conflict>
    <text>Contaminating sequence. Potential poly-A sequence.</text>
</comment>
<keyword id="KW-0007">Acetylation</keyword>
<keyword id="KW-0010">Activator</keyword>
<keyword id="KW-0131">Cell cycle</keyword>
<keyword id="KW-1017">Isopeptide bond</keyword>
<keyword id="KW-0539">Nucleus</keyword>
<keyword id="KW-0597">Phosphoprotein</keyword>
<keyword id="KW-1267">Proteomics identification</keyword>
<keyword id="KW-1185">Reference proteome</keyword>
<keyword id="KW-0804">Transcription</keyword>
<keyword id="KW-0805">Transcription regulation</keyword>
<keyword id="KW-0832">Ubl conjugation</keyword>
<evidence type="ECO:0000250" key="1">
    <source>
        <dbReference type="UniProtKB" id="Q8BMA5"/>
    </source>
</evidence>
<evidence type="ECO:0000255" key="2">
    <source>
        <dbReference type="PROSITE-ProRule" id="PRU00126"/>
    </source>
</evidence>
<evidence type="ECO:0000256" key="3">
    <source>
        <dbReference type="SAM" id="MobiDB-lite"/>
    </source>
</evidence>
<evidence type="ECO:0000269" key="4">
    <source>
    </source>
</evidence>
<evidence type="ECO:0000269" key="5">
    <source>
    </source>
</evidence>
<evidence type="ECO:0000269" key="6">
    <source>
    </source>
</evidence>
<evidence type="ECO:0000269" key="7">
    <source>
    </source>
</evidence>
<evidence type="ECO:0000269" key="8">
    <source>
    </source>
</evidence>
<evidence type="ECO:0000269" key="9">
    <source>
    </source>
</evidence>
<evidence type="ECO:0000269" key="10">
    <source>
    </source>
</evidence>
<evidence type="ECO:0000269" key="11">
    <source>
    </source>
</evidence>
<evidence type="ECO:0000269" key="12">
    <source>
    </source>
</evidence>
<evidence type="ECO:0000269" key="13">
    <source>
    </source>
</evidence>
<evidence type="ECO:0000269" key="14">
    <source>
    </source>
</evidence>
<evidence type="ECO:0000269" key="15">
    <source>
    </source>
</evidence>
<evidence type="ECO:0000269" key="16">
    <source>
    </source>
</evidence>
<evidence type="ECO:0000269" key="17">
    <source>
    </source>
</evidence>
<evidence type="ECO:0000269" key="18">
    <source>
    </source>
</evidence>
<evidence type="ECO:0000269" key="19">
    <source>
    </source>
</evidence>
<evidence type="ECO:0000269" key="20">
    <source>
    </source>
</evidence>
<evidence type="ECO:0000269" key="21">
    <source>
    </source>
</evidence>
<evidence type="ECO:0000269" key="22">
    <source>
    </source>
</evidence>
<evidence type="ECO:0000269" key="23">
    <source>
    </source>
</evidence>
<evidence type="ECO:0000269" key="24">
    <source>
    </source>
</evidence>
<evidence type="ECO:0000269" key="25">
    <source>
    </source>
</evidence>
<evidence type="ECO:0000269" key="26">
    <source>
    </source>
</evidence>
<evidence type="ECO:0000305" key="27"/>
<evidence type="ECO:0007744" key="28">
    <source>
    </source>
</evidence>
<evidence type="ECO:0007744" key="29">
    <source>
    </source>
</evidence>
<evidence type="ECO:0007744" key="30">
    <source>
    </source>
</evidence>